<dbReference type="EMBL" id="AM408590">
    <property type="protein sequence ID" value="CAL72171.1"/>
    <property type="molecule type" value="Genomic_DNA"/>
</dbReference>
<dbReference type="RefSeq" id="WP_003411225.1">
    <property type="nucleotide sequence ID" value="NC_008769.1"/>
</dbReference>
<dbReference type="SMR" id="A1KKK9"/>
<dbReference type="KEGG" id="mbb:BCG_2183c"/>
<dbReference type="HOGENOM" id="CLU_107907_0_5_11"/>
<dbReference type="Proteomes" id="UP000001472">
    <property type="component" value="Chromosome"/>
</dbReference>
<dbReference type="GO" id="GO:0005737">
    <property type="term" value="C:cytoplasm"/>
    <property type="evidence" value="ECO:0007669"/>
    <property type="project" value="UniProtKB-UniRule"/>
</dbReference>
<dbReference type="GO" id="GO:0009295">
    <property type="term" value="C:nucleoid"/>
    <property type="evidence" value="ECO:0007669"/>
    <property type="project" value="UniProtKB-SubCell"/>
</dbReference>
<dbReference type="GO" id="GO:0003700">
    <property type="term" value="F:DNA-binding transcription factor activity"/>
    <property type="evidence" value="ECO:0007669"/>
    <property type="project" value="UniProtKB-UniRule"/>
</dbReference>
<dbReference type="GO" id="GO:0000976">
    <property type="term" value="F:transcription cis-regulatory region binding"/>
    <property type="evidence" value="ECO:0007669"/>
    <property type="project" value="TreeGrafter"/>
</dbReference>
<dbReference type="GO" id="GO:2000143">
    <property type="term" value="P:negative regulation of DNA-templated transcription initiation"/>
    <property type="evidence" value="ECO:0007669"/>
    <property type="project" value="TreeGrafter"/>
</dbReference>
<dbReference type="CDD" id="cd16321">
    <property type="entry name" value="MraZ_C"/>
    <property type="match status" value="1"/>
</dbReference>
<dbReference type="CDD" id="cd16320">
    <property type="entry name" value="MraZ_N"/>
    <property type="match status" value="1"/>
</dbReference>
<dbReference type="FunFam" id="3.40.1550.20:FF:000004">
    <property type="entry name" value="Transcriptional regulator MraZ"/>
    <property type="match status" value="1"/>
</dbReference>
<dbReference type="Gene3D" id="3.40.1550.20">
    <property type="entry name" value="Transcriptional regulator MraZ domain"/>
    <property type="match status" value="1"/>
</dbReference>
<dbReference type="HAMAP" id="MF_01008">
    <property type="entry name" value="MraZ"/>
    <property type="match status" value="1"/>
</dbReference>
<dbReference type="InterPro" id="IPR003444">
    <property type="entry name" value="MraZ"/>
</dbReference>
<dbReference type="InterPro" id="IPR035644">
    <property type="entry name" value="MraZ_C"/>
</dbReference>
<dbReference type="InterPro" id="IPR020603">
    <property type="entry name" value="MraZ_dom"/>
</dbReference>
<dbReference type="InterPro" id="IPR035642">
    <property type="entry name" value="MraZ_N"/>
</dbReference>
<dbReference type="InterPro" id="IPR038619">
    <property type="entry name" value="MraZ_sf"/>
</dbReference>
<dbReference type="InterPro" id="IPR007159">
    <property type="entry name" value="SpoVT-AbrB_dom"/>
</dbReference>
<dbReference type="InterPro" id="IPR037914">
    <property type="entry name" value="SpoVT-AbrB_sf"/>
</dbReference>
<dbReference type="NCBIfam" id="TIGR00242">
    <property type="entry name" value="division/cell wall cluster transcriptional repressor MraZ"/>
    <property type="match status" value="1"/>
</dbReference>
<dbReference type="PANTHER" id="PTHR34701">
    <property type="entry name" value="TRANSCRIPTIONAL REGULATOR MRAZ"/>
    <property type="match status" value="1"/>
</dbReference>
<dbReference type="PANTHER" id="PTHR34701:SF1">
    <property type="entry name" value="TRANSCRIPTIONAL REGULATOR MRAZ"/>
    <property type="match status" value="1"/>
</dbReference>
<dbReference type="Pfam" id="PF02381">
    <property type="entry name" value="MraZ"/>
    <property type="match status" value="2"/>
</dbReference>
<dbReference type="SUPFAM" id="SSF89447">
    <property type="entry name" value="AbrB/MazE/MraZ-like"/>
    <property type="match status" value="1"/>
</dbReference>
<dbReference type="PROSITE" id="PS51740">
    <property type="entry name" value="SPOVT_ABRB"/>
    <property type="match status" value="2"/>
</dbReference>
<accession>A1KKK9</accession>
<protein>
    <recommendedName>
        <fullName>Transcriptional regulator MraZ</fullName>
    </recommendedName>
</protein>
<organism>
    <name type="scientific">Mycobacterium bovis (strain BCG / Pasteur 1173P2)</name>
    <dbReference type="NCBI Taxonomy" id="410289"/>
    <lineage>
        <taxon>Bacteria</taxon>
        <taxon>Bacillati</taxon>
        <taxon>Actinomycetota</taxon>
        <taxon>Actinomycetes</taxon>
        <taxon>Mycobacteriales</taxon>
        <taxon>Mycobacteriaceae</taxon>
        <taxon>Mycobacterium</taxon>
        <taxon>Mycobacterium tuberculosis complex</taxon>
    </lineage>
</organism>
<sequence length="143" mass="15912">MFLGTYTPKLDDKGRLTLPAKFRDALAGGLMVTKSQDHSLAVYPRAAFEQLARRASKAPRSNPEARAFLRNLAAGTDEQHPDSQGRITLSADHRRYASLSKDCVVIGAVDYLEIWDAQAWQNYQQIHEENFSAASDEALGDIF</sequence>
<feature type="chain" id="PRO_1000062897" description="Transcriptional regulator MraZ">
    <location>
        <begin position="1"/>
        <end position="143"/>
    </location>
</feature>
<feature type="domain" description="SpoVT-AbrB 1" evidence="2">
    <location>
        <begin position="5"/>
        <end position="47"/>
    </location>
</feature>
<feature type="domain" description="SpoVT-AbrB 2" evidence="2">
    <location>
        <begin position="76"/>
        <end position="119"/>
    </location>
</feature>
<reference key="1">
    <citation type="journal article" date="2007" name="Proc. Natl. Acad. Sci. U.S.A.">
        <title>Genome plasticity of BCG and impact on vaccine efficacy.</title>
        <authorList>
            <person name="Brosch R."/>
            <person name="Gordon S.V."/>
            <person name="Garnier T."/>
            <person name="Eiglmeier K."/>
            <person name="Frigui W."/>
            <person name="Valenti P."/>
            <person name="Dos Santos S."/>
            <person name="Duthoy S."/>
            <person name="Lacroix C."/>
            <person name="Garcia-Pelayo C."/>
            <person name="Inwald J.K."/>
            <person name="Golby P."/>
            <person name="Garcia J.N."/>
            <person name="Hewinson R.G."/>
            <person name="Behr M.A."/>
            <person name="Quail M.A."/>
            <person name="Churcher C."/>
            <person name="Barrell B.G."/>
            <person name="Parkhill J."/>
            <person name="Cole S.T."/>
        </authorList>
    </citation>
    <scope>NUCLEOTIDE SEQUENCE [LARGE SCALE GENOMIC DNA]</scope>
    <source>
        <strain>BCG / Pasteur 1173P2</strain>
    </source>
</reference>
<gene>
    <name evidence="1" type="primary">mraZ</name>
    <name type="ordered locus">BCG_2183c</name>
</gene>
<evidence type="ECO:0000255" key="1">
    <source>
        <dbReference type="HAMAP-Rule" id="MF_01008"/>
    </source>
</evidence>
<evidence type="ECO:0000255" key="2">
    <source>
        <dbReference type="PROSITE-ProRule" id="PRU01076"/>
    </source>
</evidence>
<name>MRAZ_MYCBP</name>
<comment type="subunit">
    <text evidence="1">Forms oligomers.</text>
</comment>
<comment type="subcellular location">
    <subcellularLocation>
        <location evidence="1">Cytoplasm</location>
        <location evidence="1">Nucleoid</location>
    </subcellularLocation>
</comment>
<comment type="similarity">
    <text evidence="1">Belongs to the MraZ family.</text>
</comment>
<proteinExistence type="inferred from homology"/>
<keyword id="KW-0963">Cytoplasm</keyword>
<keyword id="KW-0238">DNA-binding</keyword>
<keyword id="KW-0677">Repeat</keyword>
<keyword id="KW-0804">Transcription</keyword>
<keyword id="KW-0805">Transcription regulation</keyword>